<sequence>MPLKIAVYPGSFDPITYGHLDIIERGLRIFDKIIVAVAKNSEKNSLFPTDERIALIKEVLGDSERAEVDTFTGLLVDYVRDQGATVIIRGLRAVSDFEYEFQLAQMNRSITQDIETLFMMTSVPYSYLSSSIVKEVSSLNGPIEGLVPPAVKKALDAKFNR</sequence>
<comment type="function">
    <text evidence="1">Reversibly transfers an adenylyl group from ATP to 4'-phosphopantetheine, yielding dephospho-CoA (dPCoA) and pyrophosphate.</text>
</comment>
<comment type="catalytic activity">
    <reaction evidence="1">
        <text>(R)-4'-phosphopantetheine + ATP + H(+) = 3'-dephospho-CoA + diphosphate</text>
        <dbReference type="Rhea" id="RHEA:19801"/>
        <dbReference type="ChEBI" id="CHEBI:15378"/>
        <dbReference type="ChEBI" id="CHEBI:30616"/>
        <dbReference type="ChEBI" id="CHEBI:33019"/>
        <dbReference type="ChEBI" id="CHEBI:57328"/>
        <dbReference type="ChEBI" id="CHEBI:61723"/>
        <dbReference type="EC" id="2.7.7.3"/>
    </reaction>
</comment>
<comment type="cofactor">
    <cofactor evidence="1">
        <name>Mg(2+)</name>
        <dbReference type="ChEBI" id="CHEBI:18420"/>
    </cofactor>
</comment>
<comment type="pathway">
    <text evidence="1">Cofactor biosynthesis; coenzyme A biosynthesis; CoA from (R)-pantothenate: step 4/5.</text>
</comment>
<comment type="subunit">
    <text evidence="1">Homohexamer.</text>
</comment>
<comment type="subcellular location">
    <subcellularLocation>
        <location evidence="1">Cytoplasm</location>
    </subcellularLocation>
</comment>
<comment type="similarity">
    <text evidence="1">Belongs to the bacterial CoaD family.</text>
</comment>
<name>COAD_GEODF</name>
<evidence type="ECO:0000255" key="1">
    <source>
        <dbReference type="HAMAP-Rule" id="MF_00151"/>
    </source>
</evidence>
<dbReference type="EC" id="2.7.7.3" evidence="1"/>
<dbReference type="EMBL" id="CP001390">
    <property type="protein sequence ID" value="ACM21627.1"/>
    <property type="molecule type" value="Genomic_DNA"/>
</dbReference>
<dbReference type="RefSeq" id="WP_012648355.1">
    <property type="nucleotide sequence ID" value="NC_011979.1"/>
</dbReference>
<dbReference type="SMR" id="B9M4U3"/>
<dbReference type="STRING" id="316067.Geob_3284"/>
<dbReference type="KEGG" id="geo:Geob_3284"/>
<dbReference type="eggNOG" id="COG0669">
    <property type="taxonomic scope" value="Bacteria"/>
</dbReference>
<dbReference type="HOGENOM" id="CLU_100149_0_1_7"/>
<dbReference type="OrthoDB" id="9806661at2"/>
<dbReference type="UniPathway" id="UPA00241">
    <property type="reaction ID" value="UER00355"/>
</dbReference>
<dbReference type="Proteomes" id="UP000007721">
    <property type="component" value="Chromosome"/>
</dbReference>
<dbReference type="GO" id="GO:0005737">
    <property type="term" value="C:cytoplasm"/>
    <property type="evidence" value="ECO:0007669"/>
    <property type="project" value="UniProtKB-SubCell"/>
</dbReference>
<dbReference type="GO" id="GO:0005524">
    <property type="term" value="F:ATP binding"/>
    <property type="evidence" value="ECO:0007669"/>
    <property type="project" value="UniProtKB-KW"/>
</dbReference>
<dbReference type="GO" id="GO:0004595">
    <property type="term" value="F:pantetheine-phosphate adenylyltransferase activity"/>
    <property type="evidence" value="ECO:0007669"/>
    <property type="project" value="UniProtKB-UniRule"/>
</dbReference>
<dbReference type="GO" id="GO:0015937">
    <property type="term" value="P:coenzyme A biosynthetic process"/>
    <property type="evidence" value="ECO:0007669"/>
    <property type="project" value="UniProtKB-UniRule"/>
</dbReference>
<dbReference type="CDD" id="cd02163">
    <property type="entry name" value="PPAT"/>
    <property type="match status" value="1"/>
</dbReference>
<dbReference type="Gene3D" id="3.40.50.620">
    <property type="entry name" value="HUPs"/>
    <property type="match status" value="1"/>
</dbReference>
<dbReference type="HAMAP" id="MF_00151">
    <property type="entry name" value="PPAT_bact"/>
    <property type="match status" value="1"/>
</dbReference>
<dbReference type="InterPro" id="IPR004821">
    <property type="entry name" value="Cyt_trans-like"/>
</dbReference>
<dbReference type="InterPro" id="IPR001980">
    <property type="entry name" value="PPAT"/>
</dbReference>
<dbReference type="InterPro" id="IPR014729">
    <property type="entry name" value="Rossmann-like_a/b/a_fold"/>
</dbReference>
<dbReference type="NCBIfam" id="TIGR01510">
    <property type="entry name" value="coaD_prev_kdtB"/>
    <property type="match status" value="1"/>
</dbReference>
<dbReference type="NCBIfam" id="TIGR00125">
    <property type="entry name" value="cyt_tran_rel"/>
    <property type="match status" value="1"/>
</dbReference>
<dbReference type="PANTHER" id="PTHR21342">
    <property type="entry name" value="PHOSPHOPANTETHEINE ADENYLYLTRANSFERASE"/>
    <property type="match status" value="1"/>
</dbReference>
<dbReference type="PANTHER" id="PTHR21342:SF1">
    <property type="entry name" value="PHOSPHOPANTETHEINE ADENYLYLTRANSFERASE"/>
    <property type="match status" value="1"/>
</dbReference>
<dbReference type="Pfam" id="PF01467">
    <property type="entry name" value="CTP_transf_like"/>
    <property type="match status" value="1"/>
</dbReference>
<dbReference type="PRINTS" id="PR01020">
    <property type="entry name" value="LPSBIOSNTHSS"/>
</dbReference>
<dbReference type="SUPFAM" id="SSF52374">
    <property type="entry name" value="Nucleotidylyl transferase"/>
    <property type="match status" value="1"/>
</dbReference>
<gene>
    <name evidence="1" type="primary">coaD</name>
    <name type="ordered locus">Geob_3284</name>
</gene>
<reference key="1">
    <citation type="submission" date="2009-01" db="EMBL/GenBank/DDBJ databases">
        <title>Complete sequence of Geobacter sp. FRC-32.</title>
        <authorList>
            <consortium name="US DOE Joint Genome Institute"/>
            <person name="Lucas S."/>
            <person name="Copeland A."/>
            <person name="Lapidus A."/>
            <person name="Glavina del Rio T."/>
            <person name="Dalin E."/>
            <person name="Tice H."/>
            <person name="Bruce D."/>
            <person name="Goodwin L."/>
            <person name="Pitluck S."/>
            <person name="Saunders E."/>
            <person name="Brettin T."/>
            <person name="Detter J.C."/>
            <person name="Han C."/>
            <person name="Larimer F."/>
            <person name="Land M."/>
            <person name="Hauser L."/>
            <person name="Kyrpides N."/>
            <person name="Ovchinnikova G."/>
            <person name="Kostka J."/>
            <person name="Richardson P."/>
        </authorList>
    </citation>
    <scope>NUCLEOTIDE SEQUENCE [LARGE SCALE GENOMIC DNA]</scope>
    <source>
        <strain>DSM 22248 / JCM 15807 / FRC-32</strain>
    </source>
</reference>
<feature type="chain" id="PRO_1000123288" description="Phosphopantetheine adenylyltransferase">
    <location>
        <begin position="1"/>
        <end position="161"/>
    </location>
</feature>
<feature type="binding site" evidence="1">
    <location>
        <begin position="11"/>
        <end position="12"/>
    </location>
    <ligand>
        <name>ATP</name>
        <dbReference type="ChEBI" id="CHEBI:30616"/>
    </ligand>
</feature>
<feature type="binding site" evidence="1">
    <location>
        <position position="11"/>
    </location>
    <ligand>
        <name>substrate</name>
    </ligand>
</feature>
<feature type="binding site" evidence="1">
    <location>
        <position position="19"/>
    </location>
    <ligand>
        <name>ATP</name>
        <dbReference type="ChEBI" id="CHEBI:30616"/>
    </ligand>
</feature>
<feature type="binding site" evidence="1">
    <location>
        <position position="43"/>
    </location>
    <ligand>
        <name>substrate</name>
    </ligand>
</feature>
<feature type="binding site" evidence="1">
    <location>
        <position position="75"/>
    </location>
    <ligand>
        <name>substrate</name>
    </ligand>
</feature>
<feature type="binding site" evidence="1">
    <location>
        <position position="89"/>
    </location>
    <ligand>
        <name>substrate</name>
    </ligand>
</feature>
<feature type="binding site" evidence="1">
    <location>
        <begin position="90"/>
        <end position="92"/>
    </location>
    <ligand>
        <name>ATP</name>
        <dbReference type="ChEBI" id="CHEBI:30616"/>
    </ligand>
</feature>
<feature type="binding site" evidence="1">
    <location>
        <position position="100"/>
    </location>
    <ligand>
        <name>ATP</name>
        <dbReference type="ChEBI" id="CHEBI:30616"/>
    </ligand>
</feature>
<feature type="binding site" evidence="1">
    <location>
        <begin position="125"/>
        <end position="131"/>
    </location>
    <ligand>
        <name>ATP</name>
        <dbReference type="ChEBI" id="CHEBI:30616"/>
    </ligand>
</feature>
<feature type="site" description="Transition state stabilizer" evidence="1">
    <location>
        <position position="19"/>
    </location>
</feature>
<proteinExistence type="inferred from homology"/>
<protein>
    <recommendedName>
        <fullName evidence="1">Phosphopantetheine adenylyltransferase</fullName>
        <ecNumber evidence="1">2.7.7.3</ecNumber>
    </recommendedName>
    <alternativeName>
        <fullName evidence="1">Dephospho-CoA pyrophosphorylase</fullName>
    </alternativeName>
    <alternativeName>
        <fullName evidence="1">Pantetheine-phosphate adenylyltransferase</fullName>
        <shortName evidence="1">PPAT</shortName>
    </alternativeName>
</protein>
<keyword id="KW-0067">ATP-binding</keyword>
<keyword id="KW-0173">Coenzyme A biosynthesis</keyword>
<keyword id="KW-0963">Cytoplasm</keyword>
<keyword id="KW-0460">Magnesium</keyword>
<keyword id="KW-0547">Nucleotide-binding</keyword>
<keyword id="KW-0548">Nucleotidyltransferase</keyword>
<keyword id="KW-1185">Reference proteome</keyword>
<keyword id="KW-0808">Transferase</keyword>
<organism>
    <name type="scientific">Geotalea daltonii (strain DSM 22248 / JCM 15807 / FRC-32)</name>
    <name type="common">Geobacter daltonii</name>
    <dbReference type="NCBI Taxonomy" id="316067"/>
    <lineage>
        <taxon>Bacteria</taxon>
        <taxon>Pseudomonadati</taxon>
        <taxon>Thermodesulfobacteriota</taxon>
        <taxon>Desulfuromonadia</taxon>
        <taxon>Geobacterales</taxon>
        <taxon>Geobacteraceae</taxon>
        <taxon>Geotalea</taxon>
    </lineage>
</organism>
<accession>B9M4U3</accession>